<dbReference type="EC" id="2.7.8.13" evidence="1"/>
<dbReference type="EMBL" id="CR378673">
    <property type="protein sequence ID" value="CAG21524.1"/>
    <property type="molecule type" value="Genomic_DNA"/>
</dbReference>
<dbReference type="RefSeq" id="WP_011219778.1">
    <property type="nucleotide sequence ID" value="NC_006370.1"/>
</dbReference>
<dbReference type="SMR" id="Q6LMF3"/>
<dbReference type="STRING" id="298386.PBPRA3218"/>
<dbReference type="KEGG" id="ppr:PBPRA3218"/>
<dbReference type="eggNOG" id="COG0472">
    <property type="taxonomic scope" value="Bacteria"/>
</dbReference>
<dbReference type="HOGENOM" id="CLU_023982_0_0_6"/>
<dbReference type="UniPathway" id="UPA00219"/>
<dbReference type="Proteomes" id="UP000000593">
    <property type="component" value="Chromosome 1"/>
</dbReference>
<dbReference type="GO" id="GO:0005886">
    <property type="term" value="C:plasma membrane"/>
    <property type="evidence" value="ECO:0007669"/>
    <property type="project" value="UniProtKB-SubCell"/>
</dbReference>
<dbReference type="GO" id="GO:0046872">
    <property type="term" value="F:metal ion binding"/>
    <property type="evidence" value="ECO:0007669"/>
    <property type="project" value="UniProtKB-KW"/>
</dbReference>
<dbReference type="GO" id="GO:0008963">
    <property type="term" value="F:phospho-N-acetylmuramoyl-pentapeptide-transferase activity"/>
    <property type="evidence" value="ECO:0007669"/>
    <property type="project" value="UniProtKB-UniRule"/>
</dbReference>
<dbReference type="GO" id="GO:0051992">
    <property type="term" value="F:UDP-N-acetylmuramoyl-L-alanyl-D-glutamyl-meso-2,6-diaminopimelyl-D-alanyl-D-alanine:undecaprenyl-phosphate transferase activity"/>
    <property type="evidence" value="ECO:0007669"/>
    <property type="project" value="RHEA"/>
</dbReference>
<dbReference type="GO" id="GO:0051301">
    <property type="term" value="P:cell division"/>
    <property type="evidence" value="ECO:0007669"/>
    <property type="project" value="UniProtKB-KW"/>
</dbReference>
<dbReference type="GO" id="GO:0071555">
    <property type="term" value="P:cell wall organization"/>
    <property type="evidence" value="ECO:0007669"/>
    <property type="project" value="UniProtKB-KW"/>
</dbReference>
<dbReference type="GO" id="GO:0009252">
    <property type="term" value="P:peptidoglycan biosynthetic process"/>
    <property type="evidence" value="ECO:0007669"/>
    <property type="project" value="UniProtKB-UniRule"/>
</dbReference>
<dbReference type="GO" id="GO:0008360">
    <property type="term" value="P:regulation of cell shape"/>
    <property type="evidence" value="ECO:0007669"/>
    <property type="project" value="UniProtKB-KW"/>
</dbReference>
<dbReference type="CDD" id="cd06852">
    <property type="entry name" value="GT_MraY"/>
    <property type="match status" value="1"/>
</dbReference>
<dbReference type="HAMAP" id="MF_00038">
    <property type="entry name" value="MraY"/>
    <property type="match status" value="1"/>
</dbReference>
<dbReference type="InterPro" id="IPR000715">
    <property type="entry name" value="Glycosyl_transferase_4"/>
</dbReference>
<dbReference type="InterPro" id="IPR003524">
    <property type="entry name" value="PNAcMuramoyl-5peptid_Trfase"/>
</dbReference>
<dbReference type="InterPro" id="IPR018480">
    <property type="entry name" value="PNAcMuramoyl-5peptid_Trfase_CS"/>
</dbReference>
<dbReference type="NCBIfam" id="TIGR00445">
    <property type="entry name" value="mraY"/>
    <property type="match status" value="1"/>
</dbReference>
<dbReference type="PANTHER" id="PTHR22926">
    <property type="entry name" value="PHOSPHO-N-ACETYLMURAMOYL-PENTAPEPTIDE-TRANSFERASE"/>
    <property type="match status" value="1"/>
</dbReference>
<dbReference type="PANTHER" id="PTHR22926:SF5">
    <property type="entry name" value="PHOSPHO-N-ACETYLMURAMOYL-PENTAPEPTIDE-TRANSFERASE HOMOLOG"/>
    <property type="match status" value="1"/>
</dbReference>
<dbReference type="Pfam" id="PF00953">
    <property type="entry name" value="Glycos_transf_4"/>
    <property type="match status" value="1"/>
</dbReference>
<dbReference type="Pfam" id="PF10555">
    <property type="entry name" value="MraY_sig1"/>
    <property type="match status" value="1"/>
</dbReference>
<dbReference type="PROSITE" id="PS01347">
    <property type="entry name" value="MRAY_1"/>
    <property type="match status" value="1"/>
</dbReference>
<dbReference type="PROSITE" id="PS01348">
    <property type="entry name" value="MRAY_2"/>
    <property type="match status" value="1"/>
</dbReference>
<gene>
    <name evidence="1" type="primary">mraY</name>
    <name type="ordered locus">PBPRA3218</name>
</gene>
<proteinExistence type="inferred from homology"/>
<protein>
    <recommendedName>
        <fullName evidence="1">Phospho-N-acetylmuramoyl-pentapeptide-transferase</fullName>
        <ecNumber evidence="1">2.7.8.13</ecNumber>
    </recommendedName>
    <alternativeName>
        <fullName evidence="1">UDP-MurNAc-pentapeptide phosphotransferase</fullName>
    </alternativeName>
</protein>
<accession>Q6LMF3</accession>
<organism>
    <name type="scientific">Photobacterium profundum (strain SS9)</name>
    <dbReference type="NCBI Taxonomy" id="298386"/>
    <lineage>
        <taxon>Bacteria</taxon>
        <taxon>Pseudomonadati</taxon>
        <taxon>Pseudomonadota</taxon>
        <taxon>Gammaproteobacteria</taxon>
        <taxon>Vibrionales</taxon>
        <taxon>Vibrionaceae</taxon>
        <taxon>Photobacterium</taxon>
    </lineage>
</organism>
<evidence type="ECO:0000255" key="1">
    <source>
        <dbReference type="HAMAP-Rule" id="MF_00038"/>
    </source>
</evidence>
<keyword id="KW-0131">Cell cycle</keyword>
<keyword id="KW-0132">Cell division</keyword>
<keyword id="KW-0997">Cell inner membrane</keyword>
<keyword id="KW-1003">Cell membrane</keyword>
<keyword id="KW-0133">Cell shape</keyword>
<keyword id="KW-0961">Cell wall biogenesis/degradation</keyword>
<keyword id="KW-0460">Magnesium</keyword>
<keyword id="KW-0472">Membrane</keyword>
<keyword id="KW-0479">Metal-binding</keyword>
<keyword id="KW-0573">Peptidoglycan synthesis</keyword>
<keyword id="KW-1185">Reference proteome</keyword>
<keyword id="KW-0808">Transferase</keyword>
<keyword id="KW-0812">Transmembrane</keyword>
<keyword id="KW-1133">Transmembrane helix</keyword>
<feature type="chain" id="PRO_0000108865" description="Phospho-N-acetylmuramoyl-pentapeptide-transferase">
    <location>
        <begin position="1"/>
        <end position="360"/>
    </location>
</feature>
<feature type="transmembrane region" description="Helical" evidence="1">
    <location>
        <begin position="26"/>
        <end position="46"/>
    </location>
</feature>
<feature type="transmembrane region" description="Helical" evidence="1">
    <location>
        <begin position="70"/>
        <end position="90"/>
    </location>
</feature>
<feature type="transmembrane region" description="Helical" evidence="1">
    <location>
        <begin position="94"/>
        <end position="114"/>
    </location>
</feature>
<feature type="transmembrane region" description="Helical" evidence="1">
    <location>
        <begin position="132"/>
        <end position="152"/>
    </location>
</feature>
<feature type="transmembrane region" description="Helical" evidence="1">
    <location>
        <begin position="168"/>
        <end position="188"/>
    </location>
</feature>
<feature type="transmembrane region" description="Helical" evidence="1">
    <location>
        <begin position="199"/>
        <end position="219"/>
    </location>
</feature>
<feature type="transmembrane region" description="Helical" evidence="1">
    <location>
        <begin position="239"/>
        <end position="259"/>
    </location>
</feature>
<feature type="transmembrane region" description="Helical" evidence="1">
    <location>
        <begin position="263"/>
        <end position="283"/>
    </location>
</feature>
<feature type="transmembrane region" description="Helical" evidence="1">
    <location>
        <begin position="288"/>
        <end position="308"/>
    </location>
</feature>
<feature type="transmembrane region" description="Helical" evidence="1">
    <location>
        <begin position="338"/>
        <end position="358"/>
    </location>
</feature>
<sequence>MIYWLADLLEPSYPFFRLFEYLTFRAIMSVLTALILSLWMGPRLIARLQMLQIGQVVRNDGPESHFSKRGTPTMGGIMILAAITITALLWTDLSNPYIWAVLAVMLGYGVVGFVDDYRKVVHKNSDGLIARWKYFWQSVIALVIAFALYMHGKDTAATQLVVPFFKDVMPQLGLLYIVLTYFVIVGTSNAVNLTDGLDGLAIMPTVMVAGGMAFIAWATGNVNFAEYLHIPYLKDTSELVVLCTAIVGAGLGFLWFNTYPAQVFMGDVGSLALGGALGTIAVLVRQELLLVIMGGVFVMETVSVILQVGSYKLRGQRIFRMAPIHHHYELKGWPEPRVIVRFWIITLMLVLIALATLKVR</sequence>
<name>MRAY_PHOPR</name>
<comment type="function">
    <text evidence="1">Catalyzes the initial step of the lipid cycle reactions in the biosynthesis of the cell wall peptidoglycan: transfers peptidoglycan precursor phospho-MurNAc-pentapeptide from UDP-MurNAc-pentapeptide onto the lipid carrier undecaprenyl phosphate, yielding undecaprenyl-pyrophosphoryl-MurNAc-pentapeptide, known as lipid I.</text>
</comment>
<comment type="catalytic activity">
    <reaction evidence="1">
        <text>UDP-N-acetyl-alpha-D-muramoyl-L-alanyl-gamma-D-glutamyl-meso-2,6-diaminopimeloyl-D-alanyl-D-alanine + di-trans,octa-cis-undecaprenyl phosphate = di-trans,octa-cis-undecaprenyl diphospho-N-acetyl-alpha-D-muramoyl-L-alanyl-D-glutamyl-meso-2,6-diaminopimeloyl-D-alanyl-D-alanine + UMP</text>
        <dbReference type="Rhea" id="RHEA:28386"/>
        <dbReference type="ChEBI" id="CHEBI:57865"/>
        <dbReference type="ChEBI" id="CHEBI:60392"/>
        <dbReference type="ChEBI" id="CHEBI:61386"/>
        <dbReference type="ChEBI" id="CHEBI:61387"/>
        <dbReference type="EC" id="2.7.8.13"/>
    </reaction>
</comment>
<comment type="cofactor">
    <cofactor evidence="1">
        <name>Mg(2+)</name>
        <dbReference type="ChEBI" id="CHEBI:18420"/>
    </cofactor>
</comment>
<comment type="pathway">
    <text evidence="1">Cell wall biogenesis; peptidoglycan biosynthesis.</text>
</comment>
<comment type="subcellular location">
    <subcellularLocation>
        <location evidence="1">Cell inner membrane</location>
        <topology evidence="1">Multi-pass membrane protein</topology>
    </subcellularLocation>
</comment>
<comment type="similarity">
    <text evidence="1">Belongs to the glycosyltransferase 4 family. MraY subfamily.</text>
</comment>
<reference key="1">
    <citation type="journal article" date="2005" name="Science">
        <title>Life at depth: Photobacterium profundum genome sequence and expression analysis.</title>
        <authorList>
            <person name="Vezzi A."/>
            <person name="Campanaro S."/>
            <person name="D'Angelo M."/>
            <person name="Simonato F."/>
            <person name="Vitulo N."/>
            <person name="Lauro F.M."/>
            <person name="Cestaro A."/>
            <person name="Malacrida G."/>
            <person name="Simionati B."/>
            <person name="Cannata N."/>
            <person name="Romualdi C."/>
            <person name="Bartlett D.H."/>
            <person name="Valle G."/>
        </authorList>
    </citation>
    <scope>NUCLEOTIDE SEQUENCE [LARGE SCALE GENOMIC DNA]</scope>
    <source>
        <strain>ATCC BAA-1253 / SS9</strain>
    </source>
</reference>